<reference key="1">
    <citation type="submission" date="2009-06" db="EMBL/GenBank/DDBJ databases">
        <title>Complete sequence of chromosome of Geopacillus sp. WCH70.</title>
        <authorList>
            <consortium name="US DOE Joint Genome Institute"/>
            <person name="Lucas S."/>
            <person name="Copeland A."/>
            <person name="Lapidus A."/>
            <person name="Glavina del Rio T."/>
            <person name="Dalin E."/>
            <person name="Tice H."/>
            <person name="Bruce D."/>
            <person name="Goodwin L."/>
            <person name="Pitluck S."/>
            <person name="Chertkov O."/>
            <person name="Brettin T."/>
            <person name="Detter J.C."/>
            <person name="Han C."/>
            <person name="Larimer F."/>
            <person name="Land M."/>
            <person name="Hauser L."/>
            <person name="Kyrpides N."/>
            <person name="Mikhailova N."/>
            <person name="Brumm P."/>
            <person name="Mead D.A."/>
            <person name="Richardson P."/>
        </authorList>
    </citation>
    <scope>NUCLEOTIDE SEQUENCE [LARGE SCALE GENOMIC DNA]</scope>
    <source>
        <strain>WCH70</strain>
    </source>
</reference>
<gene>
    <name evidence="1" type="primary">lipA</name>
    <name type="ordered locus">GWCH70_2906</name>
</gene>
<protein>
    <recommendedName>
        <fullName evidence="1">Lipoyl synthase</fullName>
        <ecNumber evidence="1">2.8.1.8</ecNumber>
    </recommendedName>
    <alternativeName>
        <fullName evidence="1">Lip-syn</fullName>
        <shortName evidence="1">LS</shortName>
    </alternativeName>
    <alternativeName>
        <fullName evidence="1">Lipoate synthase</fullName>
    </alternativeName>
    <alternativeName>
        <fullName evidence="1">Lipoic acid synthase</fullName>
    </alternativeName>
    <alternativeName>
        <fullName evidence="1">Sulfur insertion protein LipA</fullName>
    </alternativeName>
</protein>
<comment type="function">
    <text evidence="1">Catalyzes the radical-mediated insertion of two sulfur atoms into the C-6 and C-8 positions of the octanoyl moiety bound to the lipoyl domains of lipoate-dependent enzymes, thereby converting the octanoylated domains into lipoylated derivatives.</text>
</comment>
<comment type="catalytic activity">
    <reaction evidence="1">
        <text>[[Fe-S] cluster scaffold protein carrying a second [4Fe-4S](2+) cluster] + N(6)-octanoyl-L-lysyl-[protein] + 2 oxidized [2Fe-2S]-[ferredoxin] + 2 S-adenosyl-L-methionine + 4 H(+) = [[Fe-S] cluster scaffold protein] + N(6)-[(R)-dihydrolipoyl]-L-lysyl-[protein] + 4 Fe(3+) + 2 hydrogen sulfide + 2 5'-deoxyadenosine + 2 L-methionine + 2 reduced [2Fe-2S]-[ferredoxin]</text>
        <dbReference type="Rhea" id="RHEA:16585"/>
        <dbReference type="Rhea" id="RHEA-COMP:9928"/>
        <dbReference type="Rhea" id="RHEA-COMP:10000"/>
        <dbReference type="Rhea" id="RHEA-COMP:10001"/>
        <dbReference type="Rhea" id="RHEA-COMP:10475"/>
        <dbReference type="Rhea" id="RHEA-COMP:14568"/>
        <dbReference type="Rhea" id="RHEA-COMP:14569"/>
        <dbReference type="ChEBI" id="CHEBI:15378"/>
        <dbReference type="ChEBI" id="CHEBI:17319"/>
        <dbReference type="ChEBI" id="CHEBI:29034"/>
        <dbReference type="ChEBI" id="CHEBI:29919"/>
        <dbReference type="ChEBI" id="CHEBI:33722"/>
        <dbReference type="ChEBI" id="CHEBI:33737"/>
        <dbReference type="ChEBI" id="CHEBI:33738"/>
        <dbReference type="ChEBI" id="CHEBI:57844"/>
        <dbReference type="ChEBI" id="CHEBI:59789"/>
        <dbReference type="ChEBI" id="CHEBI:78809"/>
        <dbReference type="ChEBI" id="CHEBI:83100"/>
        <dbReference type="EC" id="2.8.1.8"/>
    </reaction>
</comment>
<comment type="cofactor">
    <cofactor evidence="1">
        <name>[4Fe-4S] cluster</name>
        <dbReference type="ChEBI" id="CHEBI:49883"/>
    </cofactor>
    <text evidence="1">Binds 2 [4Fe-4S] clusters per subunit. One cluster is coordinated with 3 cysteines and an exchangeable S-adenosyl-L-methionine.</text>
</comment>
<comment type="pathway">
    <text evidence="1">Protein modification; protein lipoylation via endogenous pathway; protein N(6)-(lipoyl)lysine from octanoyl-[acyl-carrier-protein].</text>
</comment>
<comment type="subcellular location">
    <subcellularLocation>
        <location evidence="1">Cytoplasm</location>
    </subcellularLocation>
</comment>
<comment type="similarity">
    <text evidence="1">Belongs to the radical SAM superfamily. Lipoyl synthase family.</text>
</comment>
<evidence type="ECO:0000255" key="1">
    <source>
        <dbReference type="HAMAP-Rule" id="MF_00206"/>
    </source>
</evidence>
<evidence type="ECO:0000255" key="2">
    <source>
        <dbReference type="PROSITE-ProRule" id="PRU01266"/>
    </source>
</evidence>
<proteinExistence type="inferred from homology"/>
<keyword id="KW-0004">4Fe-4S</keyword>
<keyword id="KW-0963">Cytoplasm</keyword>
<keyword id="KW-0408">Iron</keyword>
<keyword id="KW-0411">Iron-sulfur</keyword>
<keyword id="KW-0479">Metal-binding</keyword>
<keyword id="KW-0949">S-adenosyl-L-methionine</keyword>
<keyword id="KW-0808">Transferase</keyword>
<feature type="chain" id="PRO_1000204149" description="Lipoyl synthase">
    <location>
        <begin position="1"/>
        <end position="298"/>
    </location>
</feature>
<feature type="domain" description="Radical SAM core" evidence="2">
    <location>
        <begin position="53"/>
        <end position="269"/>
    </location>
</feature>
<feature type="binding site" evidence="1">
    <location>
        <position position="40"/>
    </location>
    <ligand>
        <name>[4Fe-4S] cluster</name>
        <dbReference type="ChEBI" id="CHEBI:49883"/>
        <label>1</label>
    </ligand>
</feature>
<feature type="binding site" evidence="1">
    <location>
        <position position="45"/>
    </location>
    <ligand>
        <name>[4Fe-4S] cluster</name>
        <dbReference type="ChEBI" id="CHEBI:49883"/>
        <label>1</label>
    </ligand>
</feature>
<feature type="binding site" evidence="1">
    <location>
        <position position="51"/>
    </location>
    <ligand>
        <name>[4Fe-4S] cluster</name>
        <dbReference type="ChEBI" id="CHEBI:49883"/>
        <label>1</label>
    </ligand>
</feature>
<feature type="binding site" evidence="1">
    <location>
        <position position="67"/>
    </location>
    <ligand>
        <name>[4Fe-4S] cluster</name>
        <dbReference type="ChEBI" id="CHEBI:49883"/>
        <label>2</label>
        <note>4Fe-4S-S-AdoMet</note>
    </ligand>
</feature>
<feature type="binding site" evidence="1">
    <location>
        <position position="71"/>
    </location>
    <ligand>
        <name>[4Fe-4S] cluster</name>
        <dbReference type="ChEBI" id="CHEBI:49883"/>
        <label>2</label>
        <note>4Fe-4S-S-AdoMet</note>
    </ligand>
</feature>
<feature type="binding site" evidence="1">
    <location>
        <position position="74"/>
    </location>
    <ligand>
        <name>[4Fe-4S] cluster</name>
        <dbReference type="ChEBI" id="CHEBI:49883"/>
        <label>2</label>
        <note>4Fe-4S-S-AdoMet</note>
    </ligand>
</feature>
<feature type="binding site" evidence="1">
    <location>
        <position position="280"/>
    </location>
    <ligand>
        <name>[4Fe-4S] cluster</name>
        <dbReference type="ChEBI" id="CHEBI:49883"/>
        <label>1</label>
    </ligand>
</feature>
<accession>C5D7H5</accession>
<sequence>MATNEEHLRKPEWLKIKLNTNENYTGLKKLMRENRLHTVCEEAKCPNIHECWAVRRTATFMILGNVCTRACRFCAVKTGLPTELDWQEPERVAESVRLMNLKHVVVTAVARDDLKDGGAAVFAETVRAIRRKNPFTTIEVLPSDMGGVYENLKTLMDARPDILNHNIETVRRLTPRVRARATYERSLEFLRRAKELQPDIPTKSSIMVGLGETKEEIIEAMDDLRANHVDILTIGQYLQPTKKHLKVVKYYHPDEFRELKEIALSKGFTHCEAGPLVRSSYHADEQVNAASAARQMKA</sequence>
<organism>
    <name type="scientific">Geobacillus sp. (strain WCH70)</name>
    <dbReference type="NCBI Taxonomy" id="471223"/>
    <lineage>
        <taxon>Bacteria</taxon>
        <taxon>Bacillati</taxon>
        <taxon>Bacillota</taxon>
        <taxon>Bacilli</taxon>
        <taxon>Bacillales</taxon>
        <taxon>Anoxybacillaceae</taxon>
        <taxon>Geobacillus</taxon>
    </lineage>
</organism>
<dbReference type="EC" id="2.8.1.8" evidence="1"/>
<dbReference type="EMBL" id="CP001638">
    <property type="protein sequence ID" value="ACS25585.1"/>
    <property type="molecule type" value="Genomic_DNA"/>
</dbReference>
<dbReference type="SMR" id="C5D7H5"/>
<dbReference type="STRING" id="471223.GWCH70_2906"/>
<dbReference type="KEGG" id="gwc:GWCH70_2906"/>
<dbReference type="eggNOG" id="COG0320">
    <property type="taxonomic scope" value="Bacteria"/>
</dbReference>
<dbReference type="HOGENOM" id="CLU_033144_2_1_9"/>
<dbReference type="OrthoDB" id="9787898at2"/>
<dbReference type="GO" id="GO:0005737">
    <property type="term" value="C:cytoplasm"/>
    <property type="evidence" value="ECO:0007669"/>
    <property type="project" value="UniProtKB-SubCell"/>
</dbReference>
<dbReference type="GO" id="GO:0051539">
    <property type="term" value="F:4 iron, 4 sulfur cluster binding"/>
    <property type="evidence" value="ECO:0007669"/>
    <property type="project" value="UniProtKB-UniRule"/>
</dbReference>
<dbReference type="GO" id="GO:0016992">
    <property type="term" value="F:lipoate synthase activity"/>
    <property type="evidence" value="ECO:0007669"/>
    <property type="project" value="UniProtKB-UniRule"/>
</dbReference>
<dbReference type="GO" id="GO:0046872">
    <property type="term" value="F:metal ion binding"/>
    <property type="evidence" value="ECO:0007669"/>
    <property type="project" value="UniProtKB-KW"/>
</dbReference>
<dbReference type="CDD" id="cd01335">
    <property type="entry name" value="Radical_SAM"/>
    <property type="match status" value="1"/>
</dbReference>
<dbReference type="FunFam" id="3.20.20.70:FF:000040">
    <property type="entry name" value="Lipoyl synthase"/>
    <property type="match status" value="1"/>
</dbReference>
<dbReference type="Gene3D" id="3.20.20.70">
    <property type="entry name" value="Aldolase class I"/>
    <property type="match status" value="1"/>
</dbReference>
<dbReference type="HAMAP" id="MF_00206">
    <property type="entry name" value="Lipoyl_synth"/>
    <property type="match status" value="1"/>
</dbReference>
<dbReference type="InterPro" id="IPR013785">
    <property type="entry name" value="Aldolase_TIM"/>
</dbReference>
<dbReference type="InterPro" id="IPR006638">
    <property type="entry name" value="Elp3/MiaA/NifB-like_rSAM"/>
</dbReference>
<dbReference type="InterPro" id="IPR031691">
    <property type="entry name" value="LIAS_N"/>
</dbReference>
<dbReference type="InterPro" id="IPR003698">
    <property type="entry name" value="Lipoyl_synth"/>
</dbReference>
<dbReference type="InterPro" id="IPR007197">
    <property type="entry name" value="rSAM"/>
</dbReference>
<dbReference type="NCBIfam" id="TIGR00510">
    <property type="entry name" value="lipA"/>
    <property type="match status" value="1"/>
</dbReference>
<dbReference type="NCBIfam" id="NF004019">
    <property type="entry name" value="PRK05481.1"/>
    <property type="match status" value="1"/>
</dbReference>
<dbReference type="NCBIfam" id="NF009544">
    <property type="entry name" value="PRK12928.1"/>
    <property type="match status" value="1"/>
</dbReference>
<dbReference type="PANTHER" id="PTHR10949">
    <property type="entry name" value="LIPOYL SYNTHASE"/>
    <property type="match status" value="1"/>
</dbReference>
<dbReference type="PANTHER" id="PTHR10949:SF0">
    <property type="entry name" value="LIPOYL SYNTHASE, MITOCHONDRIAL"/>
    <property type="match status" value="1"/>
</dbReference>
<dbReference type="Pfam" id="PF16881">
    <property type="entry name" value="LIAS_N"/>
    <property type="match status" value="1"/>
</dbReference>
<dbReference type="Pfam" id="PF04055">
    <property type="entry name" value="Radical_SAM"/>
    <property type="match status" value="1"/>
</dbReference>
<dbReference type="PIRSF" id="PIRSF005963">
    <property type="entry name" value="Lipoyl_synth"/>
    <property type="match status" value="1"/>
</dbReference>
<dbReference type="SFLD" id="SFLDF00271">
    <property type="entry name" value="lipoyl_synthase"/>
    <property type="match status" value="1"/>
</dbReference>
<dbReference type="SFLD" id="SFLDG01058">
    <property type="entry name" value="lipoyl_synthase_like"/>
    <property type="match status" value="1"/>
</dbReference>
<dbReference type="SMART" id="SM00729">
    <property type="entry name" value="Elp3"/>
    <property type="match status" value="1"/>
</dbReference>
<dbReference type="SUPFAM" id="SSF102114">
    <property type="entry name" value="Radical SAM enzymes"/>
    <property type="match status" value="1"/>
</dbReference>
<dbReference type="PROSITE" id="PS51918">
    <property type="entry name" value="RADICAL_SAM"/>
    <property type="match status" value="1"/>
</dbReference>
<name>LIPA_GEOSW</name>